<keyword id="KW-0137">Centromere</keyword>
<keyword id="KW-0158">Chromosome</keyword>
<keyword id="KW-0175">Coiled coil</keyword>
<keyword id="KW-0963">Cytoplasm</keyword>
<keyword id="KW-0206">Cytoskeleton</keyword>
<keyword id="KW-0217">Developmental protein</keyword>
<keyword id="KW-0221">Differentiation</keyword>
<keyword id="KW-0995">Kinetochore</keyword>
<keyword id="KW-0449">Lipoprotein</keyword>
<keyword id="KW-0493">Microtubule</keyword>
<keyword id="KW-0524">Neurogenesis</keyword>
<keyword id="KW-0564">Palmitate</keyword>
<keyword id="KW-0597">Phosphoprotein</keyword>
<keyword id="KW-1185">Reference proteome</keyword>
<keyword id="KW-0813">Transport</keyword>
<proteinExistence type="evidence at transcript level"/>
<dbReference type="EMBL" id="AB169818">
    <property type="protein sequence ID" value="BAE01899.1"/>
    <property type="status" value="ALT_INIT"/>
    <property type="molecule type" value="mRNA"/>
</dbReference>
<dbReference type="SMR" id="Q4R4S6"/>
<dbReference type="STRING" id="9541.ENSMFAP00000038454"/>
<dbReference type="Proteomes" id="UP000233100">
    <property type="component" value="Unplaced"/>
</dbReference>
<dbReference type="GO" id="GO:0005813">
    <property type="term" value="C:centrosome"/>
    <property type="evidence" value="ECO:0007669"/>
    <property type="project" value="UniProtKB-SubCell"/>
</dbReference>
<dbReference type="GO" id="GO:0005737">
    <property type="term" value="C:cytoplasm"/>
    <property type="evidence" value="ECO:0007669"/>
    <property type="project" value="UniProtKB-KW"/>
</dbReference>
<dbReference type="GO" id="GO:0005871">
    <property type="term" value="C:kinesin complex"/>
    <property type="evidence" value="ECO:0007669"/>
    <property type="project" value="TreeGrafter"/>
</dbReference>
<dbReference type="GO" id="GO:0000776">
    <property type="term" value="C:kinetochore"/>
    <property type="evidence" value="ECO:0007669"/>
    <property type="project" value="UniProtKB-KW"/>
</dbReference>
<dbReference type="GO" id="GO:0005874">
    <property type="term" value="C:microtubule"/>
    <property type="evidence" value="ECO:0007669"/>
    <property type="project" value="UniProtKB-KW"/>
</dbReference>
<dbReference type="GO" id="GO:0005819">
    <property type="term" value="C:spindle"/>
    <property type="evidence" value="ECO:0007669"/>
    <property type="project" value="UniProtKB-SubCell"/>
</dbReference>
<dbReference type="GO" id="GO:0008017">
    <property type="term" value="F:microtubule binding"/>
    <property type="evidence" value="ECO:0007669"/>
    <property type="project" value="InterPro"/>
</dbReference>
<dbReference type="GO" id="GO:0030154">
    <property type="term" value="P:cell differentiation"/>
    <property type="evidence" value="ECO:0007669"/>
    <property type="project" value="UniProtKB-KW"/>
</dbReference>
<dbReference type="GO" id="GO:0016477">
    <property type="term" value="P:cell migration"/>
    <property type="evidence" value="ECO:0007669"/>
    <property type="project" value="TreeGrafter"/>
</dbReference>
<dbReference type="GO" id="GO:0051642">
    <property type="term" value="P:centrosome localization"/>
    <property type="evidence" value="ECO:0007669"/>
    <property type="project" value="TreeGrafter"/>
</dbReference>
<dbReference type="GO" id="GO:0007059">
    <property type="term" value="P:chromosome segregation"/>
    <property type="evidence" value="ECO:0007669"/>
    <property type="project" value="TreeGrafter"/>
</dbReference>
<dbReference type="GO" id="GO:0051303">
    <property type="term" value="P:establishment of chromosome localization"/>
    <property type="evidence" value="ECO:0007669"/>
    <property type="project" value="TreeGrafter"/>
</dbReference>
<dbReference type="GO" id="GO:0000132">
    <property type="term" value="P:establishment of mitotic spindle orientation"/>
    <property type="evidence" value="ECO:0007669"/>
    <property type="project" value="TreeGrafter"/>
</dbReference>
<dbReference type="GO" id="GO:0032418">
    <property type="term" value="P:lysosome localization"/>
    <property type="evidence" value="ECO:0000250"/>
    <property type="project" value="UniProtKB"/>
</dbReference>
<dbReference type="GO" id="GO:0007020">
    <property type="term" value="P:microtubule nucleation"/>
    <property type="evidence" value="ECO:0007669"/>
    <property type="project" value="TreeGrafter"/>
</dbReference>
<dbReference type="GO" id="GO:0007100">
    <property type="term" value="P:mitotic centrosome separation"/>
    <property type="evidence" value="ECO:0007669"/>
    <property type="project" value="TreeGrafter"/>
</dbReference>
<dbReference type="GO" id="GO:0007399">
    <property type="term" value="P:nervous system development"/>
    <property type="evidence" value="ECO:0007669"/>
    <property type="project" value="UniProtKB-KW"/>
</dbReference>
<dbReference type="GO" id="GO:1900029">
    <property type="term" value="P:positive regulation of ruffle assembly"/>
    <property type="evidence" value="ECO:0000250"/>
    <property type="project" value="UniProtKB"/>
</dbReference>
<dbReference type="GO" id="GO:0010975">
    <property type="term" value="P:regulation of neuron projection development"/>
    <property type="evidence" value="ECO:0007669"/>
    <property type="project" value="TreeGrafter"/>
</dbReference>
<dbReference type="GO" id="GO:0047496">
    <property type="term" value="P:vesicle transport along microtubule"/>
    <property type="evidence" value="ECO:0007669"/>
    <property type="project" value="TreeGrafter"/>
</dbReference>
<dbReference type="Gene3D" id="6.10.250.1080">
    <property type="match status" value="1"/>
</dbReference>
<dbReference type="InterPro" id="IPR033494">
    <property type="entry name" value="NUDE"/>
</dbReference>
<dbReference type="InterPro" id="IPR006964">
    <property type="entry name" value="NUDE_dom"/>
</dbReference>
<dbReference type="PANTHER" id="PTHR10921">
    <property type="entry name" value="NUCLEAR DISTRIBUTION PROTEIN NUDE HOMOLOG 1"/>
    <property type="match status" value="1"/>
</dbReference>
<dbReference type="PANTHER" id="PTHR10921:SF0">
    <property type="entry name" value="NUCLEAR DISTRIBUTION PROTEIN NUDE-LIKE 1"/>
    <property type="match status" value="1"/>
</dbReference>
<dbReference type="Pfam" id="PF04880">
    <property type="entry name" value="NUDE_C"/>
    <property type="match status" value="1"/>
</dbReference>
<reference key="1">
    <citation type="submission" date="2005-06" db="EMBL/GenBank/DDBJ databases">
        <title>DNA sequences of macaque genes expressed in brain or testis and its evolutionary implications.</title>
        <authorList>
            <consortium name="International consortium for macaque cDNA sequencing and analysis"/>
        </authorList>
    </citation>
    <scope>NUCLEOTIDE SEQUENCE [LARGE SCALE MRNA]</scope>
    <source>
        <tissue>Frontal cortex</tissue>
    </source>
</reference>
<comment type="function">
    <text evidence="1 2 3 4">Required for organization of the cellular microtubule array and microtubule anchoring at the centrosome. May regulate microtubule organization at least in part by targeting the microtubule severing protein KATNA1 to the centrosome. Also positively regulates the activity of the minus-end directed microtubule motor protein dynein. May enhance dynein-mediated microtubule sliding by targeting dynein to the microtubule plus ends. Required for several dynein- and microtubule-dependent processes such as the maintenance of Golgi integrity, the centripetal motion of secretory vesicles and the coupling of the nucleus and centrosome. Also required during brain development for the migration of newly formed neurons from the ventricular/subventricular zone toward the cortical plate. Required for mitosis in some cell types but appears to be dispensible for mitosis in cortical neuronal progenitors, which instead requires NDE1. Facilitates the polymerization of neurofilaments from the individual subunits NEFH and NEFL. Positively regulates lysosome peripheral distribution and ruffled border formation in osteoclasts (By similarity). Plays a role, together with DISC1, in the regulation of neurite outgrowth (By similarity). May act as a RAB9A/B effector that tethers RAB9-associated late endosomes to the dynein motor for their retrograde transport to the trans-Golgi network (By similarity).</text>
</comment>
<comment type="subunit">
    <text evidence="1 3 4">Self-associates. Interacts with DISC1, dynein, dynactin, tubulin gamma, KATNA1, KATNB1, microtubules, PAFAH1B1, PCM1, PCNT, and YWHAE. Interacts directly with NEFL and indirectly with NEFH. Interacts (via C-terminus) with CENPF. Interacts with ZNF365. Interacts with PLEKHM1 (via N- and C-terminus). Interacts with GTP-bound RAB9A; the interaction may lead to RAB9A-dynein motor tethering (By similarity).</text>
</comment>
<comment type="subcellular location">
    <subcellularLocation>
        <location evidence="1">Cytoplasm</location>
        <location evidence="1">Cytoskeleton</location>
    </subcellularLocation>
    <subcellularLocation>
        <location evidence="1">Cytoplasm</location>
        <location evidence="1">Cytoskeleton</location>
        <location evidence="1">Microtubule organizing center</location>
        <location evidence="1">Centrosome</location>
    </subcellularLocation>
    <subcellularLocation>
        <location evidence="1">Chromosome</location>
        <location evidence="1">Centromere</location>
        <location evidence="1">Kinetochore</location>
    </subcellularLocation>
    <subcellularLocation>
        <location evidence="1">Cytoplasm</location>
        <location evidence="1">Cytoskeleton</location>
        <location evidence="1">Spindle</location>
    </subcellularLocation>
    <text evidence="1">Localizes to the interphase centrosome and the mitotic spindle. Localizes to the cell body of the motor neurons and colocalizes with assembled neurofilaments within axonal processes. Localizes to the microtubules of the manchette in elongated spermatids. Localizes to the kinetochore in a CENPF-dependent manner (By similarity).</text>
</comment>
<comment type="PTM">
    <text evidence="1">Phosphorylated in mitosis. Can be phosphorylated by CDK1, CDK5 and MAPK1. Phosphorylation by CDK5 promotes interaction with KATNA1 and YWHAE (By similarity).</text>
</comment>
<comment type="PTM">
    <text evidence="1">Palmitoylation at Cys-273 reduces affinity for dynein.</text>
</comment>
<comment type="similarity">
    <text evidence="7">Belongs to the nudE family.</text>
</comment>
<comment type="sequence caution" evidence="7">
    <conflict type="erroneous initiation">
        <sequence resource="EMBL-CDS" id="BAE01899"/>
    </conflict>
    <text>Extended N-terminus.</text>
</comment>
<gene>
    <name type="primary">NDEL1</name>
    <name type="synonym">NUDEL</name>
    <name type="ORF">QflA-10529</name>
</gene>
<accession>Q4R4S6</accession>
<name>NDEL1_MACFA</name>
<feature type="chain" id="PRO_0000240211" description="Nuclear distribution protein nudE-like 1">
    <location>
        <begin position="1"/>
        <end position="347"/>
    </location>
</feature>
<feature type="region of interest" description="Self-association" evidence="1">
    <location>
        <begin position="56"/>
        <end position="166"/>
    </location>
</feature>
<feature type="region of interest" description="Interaction with KATNB1" evidence="1">
    <location>
        <begin position="64"/>
        <end position="189"/>
    </location>
</feature>
<feature type="region of interest" description="Required for interaction with PAFAH1B1" evidence="1">
    <location>
        <begin position="114"/>
        <end position="133"/>
    </location>
</feature>
<feature type="region of interest" description="Interaction with CENPF" evidence="1">
    <location>
        <begin position="175"/>
        <end position="347"/>
    </location>
</feature>
<feature type="region of interest" description="Interaction with YWHAE" evidence="1">
    <location>
        <begin position="189"/>
        <end position="256"/>
    </location>
</feature>
<feature type="region of interest" description="Interaction with NEFL" evidence="1">
    <location>
        <begin position="191"/>
        <end position="347"/>
    </location>
</feature>
<feature type="region of interest" description="Interaction with KATNA1" evidence="1">
    <location>
        <begin position="195"/>
        <end position="256"/>
    </location>
</feature>
<feature type="region of interest" description="Interaction with DISC1" evidence="1">
    <location>
        <begin position="241"/>
        <end position="280"/>
    </location>
</feature>
<feature type="region of interest" description="Required for localization to the centrosome and interaction with dynein, dynactin, tubulin gamma, PCM1 and PCNT" evidence="1">
    <location>
        <begin position="256"/>
        <end position="291"/>
    </location>
</feature>
<feature type="region of interest" description="Disordered" evidence="6">
    <location>
        <begin position="314"/>
        <end position="347"/>
    </location>
</feature>
<feature type="coiled-coil region" evidence="5">
    <location>
        <begin position="28"/>
        <end position="190"/>
    </location>
</feature>
<feature type="modified residue" description="Phosphoserine" evidence="4">
    <location>
        <position position="215"/>
    </location>
</feature>
<feature type="modified residue" description="Phosphothreonine; by CDK1 and MAPK1" evidence="4">
    <location>
        <position position="219"/>
    </location>
</feature>
<feature type="modified residue" description="Phosphoserine" evidence="4">
    <location>
        <position position="231"/>
    </location>
</feature>
<feature type="modified residue" description="Phosphoserine; by CDK1" evidence="4">
    <location>
        <position position="242"/>
    </location>
</feature>
<feature type="modified residue" description="Phosphothreonine; by CDK1 and MAPK1" evidence="4">
    <location>
        <position position="245"/>
    </location>
</feature>
<feature type="modified residue" description="Phosphoserine" evidence="2">
    <location>
        <position position="346"/>
    </location>
</feature>
<feature type="lipid moiety-binding region" description="S-palmitoyl cysteine; by ZDHHC2, ZDHHC3 and ZDHHC7" evidence="1">
    <location>
        <position position="273"/>
    </location>
</feature>
<protein>
    <recommendedName>
        <fullName>Nuclear distribution protein nudE-like 1</fullName>
        <shortName>Protein Nudel</shortName>
    </recommendedName>
</protein>
<evidence type="ECO:0000250" key="1"/>
<evidence type="ECO:0000250" key="2">
    <source>
        <dbReference type="UniProtKB" id="Q78PB6"/>
    </source>
</evidence>
<evidence type="ECO:0000250" key="3">
    <source>
        <dbReference type="UniProtKB" id="Q9ERR1"/>
    </source>
</evidence>
<evidence type="ECO:0000250" key="4">
    <source>
        <dbReference type="UniProtKB" id="Q9GZM8"/>
    </source>
</evidence>
<evidence type="ECO:0000255" key="5"/>
<evidence type="ECO:0000256" key="6">
    <source>
        <dbReference type="SAM" id="MobiDB-lite"/>
    </source>
</evidence>
<evidence type="ECO:0000305" key="7"/>
<sequence>MDGEDIPDFSSLKEETAYWKELSLKYKQSFQEARDELVEFQEGSRELEAELEAQLVQAEQRNRDLQADNQRLKYEVEALKEKLEHQYAQSYKQVSVLEDDLSQTRAIKEQLHKYVRELEQANDDLERAKRATIVSLEDFEQRLNQAIERNAFLESELDEKESLLVSVQRLKDEARDLRQELAVRERQQEVTRKSAPSSPTLDCEKMDSAVQASLSLPATPVGKGTENTFPSPKAIPNGFGTSPLTPSARISALNIVGDLLRKVGALESKLAACRNFAKDQASRKSYISGNVNCGVLNGNGTKFSRSGHTSFFDKGAVNGFDPAPPPPDPGLGSSRPSSAPGMLPLSV</sequence>
<organism>
    <name type="scientific">Macaca fascicularis</name>
    <name type="common">Crab-eating macaque</name>
    <name type="synonym">Cynomolgus monkey</name>
    <dbReference type="NCBI Taxonomy" id="9541"/>
    <lineage>
        <taxon>Eukaryota</taxon>
        <taxon>Metazoa</taxon>
        <taxon>Chordata</taxon>
        <taxon>Craniata</taxon>
        <taxon>Vertebrata</taxon>
        <taxon>Euteleostomi</taxon>
        <taxon>Mammalia</taxon>
        <taxon>Eutheria</taxon>
        <taxon>Euarchontoglires</taxon>
        <taxon>Primates</taxon>
        <taxon>Haplorrhini</taxon>
        <taxon>Catarrhini</taxon>
        <taxon>Cercopithecidae</taxon>
        <taxon>Cercopithecinae</taxon>
        <taxon>Macaca</taxon>
    </lineage>
</organism>